<keyword id="KW-0963">Cytoplasm</keyword>
<keyword id="KW-0274">FAD</keyword>
<keyword id="KW-0285">Flavoprotein</keyword>
<keyword id="KW-0520">NAD</keyword>
<keyword id="KW-0819">tRNA processing</keyword>
<accession>A9IZX9</accession>
<protein>
    <recommendedName>
        <fullName evidence="1">tRNA uridine 5-carboxymethylaminomethyl modification enzyme MnmG</fullName>
    </recommendedName>
    <alternativeName>
        <fullName evidence="1">Glucose-inhibited division protein A</fullName>
    </alternativeName>
</protein>
<reference key="1">
    <citation type="journal article" date="2007" name="Nat. Genet.">
        <title>Genomic analysis of Bartonella identifies type IV secretion systems as host adaptability factors.</title>
        <authorList>
            <person name="Saenz H.L."/>
            <person name="Engel P."/>
            <person name="Stoeckli M.C."/>
            <person name="Lanz C."/>
            <person name="Raddatz G."/>
            <person name="Vayssier-Taussat M."/>
            <person name="Birtles R."/>
            <person name="Schuster S.C."/>
            <person name="Dehio C."/>
        </authorList>
    </citation>
    <scope>NUCLEOTIDE SEQUENCE [LARGE SCALE GENOMIC DNA]</scope>
    <source>
        <strain>CIP 105476 / IBS 506</strain>
    </source>
</reference>
<comment type="function">
    <text evidence="1">NAD-binding protein involved in the addition of a carboxymethylaminomethyl (cmnm) group at the wobble position (U34) of certain tRNAs, forming tRNA-cmnm(5)s(2)U34.</text>
</comment>
<comment type="cofactor">
    <cofactor evidence="1">
        <name>FAD</name>
        <dbReference type="ChEBI" id="CHEBI:57692"/>
    </cofactor>
</comment>
<comment type="subunit">
    <text evidence="1">Homodimer. Heterotetramer of two MnmE and two MnmG subunits.</text>
</comment>
<comment type="subcellular location">
    <subcellularLocation>
        <location evidence="1">Cytoplasm</location>
    </subcellularLocation>
</comment>
<comment type="similarity">
    <text evidence="1">Belongs to the MnmG family.</text>
</comment>
<sequence length="622" mass="68762">MQSYDVIIVGGGHAGCEAASASARVGAQTALLTHKISALGTMSCNPAIGGLGKGHLVREIDALDGLMGRAADAAGIQFRLLNRRKGPAVRGPRTQADRQLYKEAIQKFLKEQENLTLVEDEVIDLIVKDHCVSGVILKKQGTIFSGAVVLTTGTFLNGFIHIGDKTWAAGRMGDPASVQLAERLKNYHIKLGRLKTGTPARLSKKTIDWDRLSKQQADENPVPFSFLTEKIEQPQIECAITRTNAQTHQIIRDNIHRSALYSGNIEGLGPRYCPSVEDKIVKFGERDGHQIFLEPEGLNDDTVYPNGLSTSLPEDVQISFLKTIEGLENATVLQPGYAIEYDFVNPQQLTKSLELRSLPGLFLAGQINGTTGYEEAAAQGLLAGLNAARKVGKLDEIFISRSTAYIGVMVDDLVSRGVCEPYRMFTSRAEFRLSLRSDNADTRLTPLAQEWGIVSKVRWDCYQKKQQRLDQARSICKNLFLTPNEASAHGLHVNHDGIRRSAYDFLAYPHMTLERLSHFWPQLQAIDSKTVESLEIEAQYAVYLDKQAQDIASLQRDERLEIPSSLDIQAISGLSNELKSKIQEVSPRSIADAQKIDGMTPAALSLIITYIQRQRREKAKKA</sequence>
<organism>
    <name type="scientific">Bartonella tribocorum (strain CIP 105476 / IBS 506)</name>
    <dbReference type="NCBI Taxonomy" id="382640"/>
    <lineage>
        <taxon>Bacteria</taxon>
        <taxon>Pseudomonadati</taxon>
        <taxon>Pseudomonadota</taxon>
        <taxon>Alphaproteobacteria</taxon>
        <taxon>Hyphomicrobiales</taxon>
        <taxon>Bartonellaceae</taxon>
        <taxon>Bartonella</taxon>
    </lineage>
</organism>
<gene>
    <name evidence="1" type="primary">mnmG</name>
    <name evidence="1" type="synonym">gidA</name>
    <name type="ordered locus">BT_2692</name>
</gene>
<proteinExistence type="inferred from homology"/>
<name>MNMG_BART1</name>
<evidence type="ECO:0000255" key="1">
    <source>
        <dbReference type="HAMAP-Rule" id="MF_00129"/>
    </source>
</evidence>
<dbReference type="EMBL" id="AM260525">
    <property type="protein sequence ID" value="CAK02639.1"/>
    <property type="molecule type" value="Genomic_DNA"/>
</dbReference>
<dbReference type="RefSeq" id="WP_012232632.1">
    <property type="nucleotide sequence ID" value="NC_010161.1"/>
</dbReference>
<dbReference type="SMR" id="A9IZX9"/>
<dbReference type="KEGG" id="btr:BT_2692"/>
<dbReference type="eggNOG" id="COG0445">
    <property type="taxonomic scope" value="Bacteria"/>
</dbReference>
<dbReference type="HOGENOM" id="CLU_007831_2_2_5"/>
<dbReference type="Proteomes" id="UP000001592">
    <property type="component" value="Chromosome"/>
</dbReference>
<dbReference type="GO" id="GO:0005829">
    <property type="term" value="C:cytosol"/>
    <property type="evidence" value="ECO:0007669"/>
    <property type="project" value="TreeGrafter"/>
</dbReference>
<dbReference type="GO" id="GO:0050660">
    <property type="term" value="F:flavin adenine dinucleotide binding"/>
    <property type="evidence" value="ECO:0007669"/>
    <property type="project" value="UniProtKB-UniRule"/>
</dbReference>
<dbReference type="GO" id="GO:0030488">
    <property type="term" value="P:tRNA methylation"/>
    <property type="evidence" value="ECO:0007669"/>
    <property type="project" value="TreeGrafter"/>
</dbReference>
<dbReference type="GO" id="GO:0002098">
    <property type="term" value="P:tRNA wobble uridine modification"/>
    <property type="evidence" value="ECO:0007669"/>
    <property type="project" value="InterPro"/>
</dbReference>
<dbReference type="FunFam" id="3.50.50.60:FF:000082">
    <property type="entry name" value="protein MTO1 homolog, mitochondrial isoform X1"/>
    <property type="match status" value="1"/>
</dbReference>
<dbReference type="FunFam" id="3.50.50.60:FF:000002">
    <property type="entry name" value="tRNA uridine 5-carboxymethylaminomethyl modification enzyme MnmG"/>
    <property type="match status" value="1"/>
</dbReference>
<dbReference type="Gene3D" id="3.50.50.60">
    <property type="entry name" value="FAD/NAD(P)-binding domain"/>
    <property type="match status" value="2"/>
</dbReference>
<dbReference type="Gene3D" id="1.10.150.570">
    <property type="entry name" value="GidA associated domain, C-terminal subdomain"/>
    <property type="match status" value="1"/>
</dbReference>
<dbReference type="Gene3D" id="1.10.10.1800">
    <property type="entry name" value="tRNA uridine 5-carboxymethylaminomethyl modification enzyme MnmG/GidA"/>
    <property type="match status" value="1"/>
</dbReference>
<dbReference type="HAMAP" id="MF_00129">
    <property type="entry name" value="MnmG_GidA"/>
    <property type="match status" value="1"/>
</dbReference>
<dbReference type="InterPro" id="IPR036188">
    <property type="entry name" value="FAD/NAD-bd_sf"/>
</dbReference>
<dbReference type="InterPro" id="IPR049312">
    <property type="entry name" value="GIDA_C_N"/>
</dbReference>
<dbReference type="InterPro" id="IPR004416">
    <property type="entry name" value="MnmG"/>
</dbReference>
<dbReference type="InterPro" id="IPR002218">
    <property type="entry name" value="MnmG-rel"/>
</dbReference>
<dbReference type="InterPro" id="IPR020595">
    <property type="entry name" value="MnmG-rel_CS"/>
</dbReference>
<dbReference type="InterPro" id="IPR026904">
    <property type="entry name" value="MnmG_C"/>
</dbReference>
<dbReference type="InterPro" id="IPR047001">
    <property type="entry name" value="MnmG_C_subdom"/>
</dbReference>
<dbReference type="InterPro" id="IPR044920">
    <property type="entry name" value="MnmG_C_subdom_sf"/>
</dbReference>
<dbReference type="InterPro" id="IPR040131">
    <property type="entry name" value="MnmG_N"/>
</dbReference>
<dbReference type="NCBIfam" id="TIGR00136">
    <property type="entry name" value="mnmG_gidA"/>
    <property type="match status" value="1"/>
</dbReference>
<dbReference type="PANTHER" id="PTHR11806">
    <property type="entry name" value="GLUCOSE INHIBITED DIVISION PROTEIN A"/>
    <property type="match status" value="1"/>
</dbReference>
<dbReference type="PANTHER" id="PTHR11806:SF0">
    <property type="entry name" value="PROTEIN MTO1 HOMOLOG, MITOCHONDRIAL"/>
    <property type="match status" value="1"/>
</dbReference>
<dbReference type="Pfam" id="PF01134">
    <property type="entry name" value="GIDA"/>
    <property type="match status" value="1"/>
</dbReference>
<dbReference type="Pfam" id="PF21680">
    <property type="entry name" value="GIDA_C_1st"/>
    <property type="match status" value="1"/>
</dbReference>
<dbReference type="Pfam" id="PF13932">
    <property type="entry name" value="SAM_GIDA_C"/>
    <property type="match status" value="1"/>
</dbReference>
<dbReference type="SMART" id="SM01228">
    <property type="entry name" value="GIDA_assoc_3"/>
    <property type="match status" value="1"/>
</dbReference>
<dbReference type="SUPFAM" id="SSF51905">
    <property type="entry name" value="FAD/NAD(P)-binding domain"/>
    <property type="match status" value="1"/>
</dbReference>
<dbReference type="PROSITE" id="PS01280">
    <property type="entry name" value="GIDA_1"/>
    <property type="match status" value="1"/>
</dbReference>
<dbReference type="PROSITE" id="PS01281">
    <property type="entry name" value="GIDA_2"/>
    <property type="match status" value="1"/>
</dbReference>
<feature type="chain" id="PRO_1000076308" description="tRNA uridine 5-carboxymethylaminomethyl modification enzyme MnmG">
    <location>
        <begin position="1"/>
        <end position="622"/>
    </location>
</feature>
<feature type="binding site" evidence="1">
    <location>
        <begin position="10"/>
        <end position="15"/>
    </location>
    <ligand>
        <name>FAD</name>
        <dbReference type="ChEBI" id="CHEBI:57692"/>
    </ligand>
</feature>
<feature type="binding site" evidence="1">
    <location>
        <position position="122"/>
    </location>
    <ligand>
        <name>FAD</name>
        <dbReference type="ChEBI" id="CHEBI:57692"/>
    </ligand>
</feature>
<feature type="binding site" evidence="1">
    <location>
        <position position="177"/>
    </location>
    <ligand>
        <name>FAD</name>
        <dbReference type="ChEBI" id="CHEBI:57692"/>
    </ligand>
</feature>
<feature type="binding site" evidence="1">
    <location>
        <begin position="269"/>
        <end position="283"/>
    </location>
    <ligand>
        <name>NAD(+)</name>
        <dbReference type="ChEBI" id="CHEBI:57540"/>
    </ligand>
</feature>
<feature type="binding site" evidence="1">
    <location>
        <position position="366"/>
    </location>
    <ligand>
        <name>FAD</name>
        <dbReference type="ChEBI" id="CHEBI:57692"/>
    </ligand>
</feature>